<accession>P61649</accession>
<reference key="1">
    <citation type="submission" date="2004-02" db="EMBL/GenBank/DDBJ databases">
        <title>Staphylococcus intermedius agr gene locus.</title>
        <authorList>
            <person name="Pei W."/>
            <person name="Ji G."/>
        </authorList>
    </citation>
    <scope>NUCLEOTIDE SEQUENCE [GENOMIC DNA]</scope>
</reference>
<comment type="function">
    <text evidence="1">Essential for the production of a quorum sensing system signal molecule, the autoinducing peptide (AIP). This quorum sensing system is responsible for the regulation of the expression of virulence factor genes. Involved in the proteolytic processing of AgrD, the precursor of AIP.</text>
</comment>
<comment type="subcellular location">
    <subcellularLocation>
        <location evidence="1">Cell membrane</location>
        <topology evidence="1">Multi-pass membrane protein</topology>
    </subcellularLocation>
</comment>
<comment type="similarity">
    <text evidence="1">Belongs to the AgrB family.</text>
</comment>
<protein>
    <recommendedName>
        <fullName evidence="1">Accessory gene regulator protein B</fullName>
        <ecNumber evidence="1">3.4.-.-</ecNumber>
    </recommendedName>
</protein>
<feature type="chain" id="PRO_0000168131" description="Accessory gene regulator protein B">
    <location>
        <begin position="1"/>
        <end position="188"/>
    </location>
</feature>
<feature type="transmembrane region" description="Helical" evidence="1">
    <location>
        <begin position="49"/>
        <end position="69"/>
    </location>
</feature>
<feature type="transmembrane region" description="Helical" evidence="1">
    <location>
        <begin position="104"/>
        <end position="126"/>
    </location>
</feature>
<feature type="transmembrane region" description="Helical" evidence="1">
    <location>
        <begin position="143"/>
        <end position="163"/>
    </location>
</feature>
<feature type="transmembrane region" description="Helical" evidence="1">
    <location>
        <begin position="166"/>
        <end position="186"/>
    </location>
</feature>
<evidence type="ECO:0000255" key="1">
    <source>
        <dbReference type="HAMAP-Rule" id="MF_00784"/>
    </source>
</evidence>
<organism>
    <name type="scientific">Staphylococcus intermedius</name>
    <dbReference type="NCBI Taxonomy" id="1285"/>
    <lineage>
        <taxon>Bacteria</taxon>
        <taxon>Bacillati</taxon>
        <taxon>Bacillota</taxon>
        <taxon>Bacilli</taxon>
        <taxon>Bacillales</taxon>
        <taxon>Staphylococcaceae</taxon>
        <taxon>Staphylococcus</taxon>
        <taxon>Staphylococcus intermedius group</taxon>
    </lineage>
</organism>
<name>AGRB_STAIN</name>
<gene>
    <name evidence="1" type="primary">agrB</name>
</gene>
<keyword id="KW-1003">Cell membrane</keyword>
<keyword id="KW-0378">Hydrolase</keyword>
<keyword id="KW-0472">Membrane</keyword>
<keyword id="KW-0645">Protease</keyword>
<keyword id="KW-0673">Quorum sensing</keyword>
<keyword id="KW-0812">Transmembrane</keyword>
<keyword id="KW-1133">Transmembrane helix</keyword>
<keyword id="KW-0843">Virulence</keyword>
<proteinExistence type="inferred from homology"/>
<sequence length="188" mass="21324">MLLIDNGIEKMALKLQQRQNLSHIEFLKVRLGMQVVVINTFKAIVTYGLALLLNIFLYTLIVHLTFLTLRTYSHGAHAKTSMLCHVQNIVAFVMLPWLIVQYDISFQFLLILSLLSALIVIKYAPAATKKRPIAPKKVKGLKIKSIIVFVLLMTIACIVPPPYNRFVVYGVLLQSFTLLPIFSIKEEV</sequence>
<dbReference type="EC" id="3.4.-.-" evidence="1"/>
<dbReference type="EMBL" id="AY557375">
    <property type="protein sequence ID" value="AAS66745.1"/>
    <property type="molecule type" value="Genomic_DNA"/>
</dbReference>
<dbReference type="RefSeq" id="WP_019167559.1">
    <property type="nucleotide sequence ID" value="NZ_MWUY01000003.1"/>
</dbReference>
<dbReference type="MEROPS" id="C75.001"/>
<dbReference type="eggNOG" id="COG4512">
    <property type="taxonomic scope" value="Bacteria"/>
</dbReference>
<dbReference type="GO" id="GO:0005886">
    <property type="term" value="C:plasma membrane"/>
    <property type="evidence" value="ECO:0007669"/>
    <property type="project" value="UniProtKB-SubCell"/>
</dbReference>
<dbReference type="GO" id="GO:0008233">
    <property type="term" value="F:peptidase activity"/>
    <property type="evidence" value="ECO:0007669"/>
    <property type="project" value="UniProtKB-UniRule"/>
</dbReference>
<dbReference type="GO" id="GO:0006508">
    <property type="term" value="P:proteolysis"/>
    <property type="evidence" value="ECO:0007669"/>
    <property type="project" value="UniProtKB-KW"/>
</dbReference>
<dbReference type="GO" id="GO:0009372">
    <property type="term" value="P:quorum sensing"/>
    <property type="evidence" value="ECO:0007669"/>
    <property type="project" value="UniProtKB-UniRule"/>
</dbReference>
<dbReference type="HAMAP" id="MF_00784">
    <property type="entry name" value="AgrB"/>
    <property type="match status" value="1"/>
</dbReference>
<dbReference type="InterPro" id="IPR006741">
    <property type="entry name" value="AgrB"/>
</dbReference>
<dbReference type="Pfam" id="PF04647">
    <property type="entry name" value="AgrB"/>
    <property type="match status" value="1"/>
</dbReference>
<dbReference type="SMART" id="SM00793">
    <property type="entry name" value="AgrB"/>
    <property type="match status" value="1"/>
</dbReference>